<dbReference type="EC" id="6.3.1.14" evidence="3"/>
<dbReference type="EMBL" id="U53881">
    <property type="protein sequence ID" value="AAB82389.1"/>
    <property type="molecule type" value="Genomic_DNA"/>
</dbReference>
<dbReference type="EMBL" id="X91258">
    <property type="protein sequence ID" value="CAA62663.1"/>
    <property type="status" value="ALT_FRAME"/>
    <property type="molecule type" value="Genomic_DNA"/>
</dbReference>
<dbReference type="EMBL" id="Z73315">
    <property type="protein sequence ID" value="CAA97715.1"/>
    <property type="molecule type" value="Genomic_DNA"/>
</dbReference>
<dbReference type="EMBL" id="BK006945">
    <property type="protein sequence ID" value="DAA09453.1"/>
    <property type="molecule type" value="Genomic_DNA"/>
</dbReference>
<dbReference type="PIR" id="S64985">
    <property type="entry name" value="S64985"/>
</dbReference>
<dbReference type="RefSeq" id="NP_013244.1">
    <property type="nucleotide sequence ID" value="NM_001182030.1"/>
</dbReference>
<dbReference type="SMR" id="Q12429"/>
<dbReference type="BioGRID" id="31412">
    <property type="interactions" value="83"/>
</dbReference>
<dbReference type="DIP" id="DIP-2618N"/>
<dbReference type="FunCoup" id="Q12429">
    <property type="interactions" value="133"/>
</dbReference>
<dbReference type="IntAct" id="Q12429">
    <property type="interactions" value="2"/>
</dbReference>
<dbReference type="MINT" id="Q12429"/>
<dbReference type="STRING" id="4932.YLR143W"/>
<dbReference type="iPTMnet" id="Q12429"/>
<dbReference type="PaxDb" id="4932-YLR143W"/>
<dbReference type="PeptideAtlas" id="Q12429"/>
<dbReference type="EnsemblFungi" id="YLR143W_mRNA">
    <property type="protein sequence ID" value="YLR143W"/>
    <property type="gene ID" value="YLR143W"/>
</dbReference>
<dbReference type="GeneID" id="850835"/>
<dbReference type="KEGG" id="sce:YLR143W"/>
<dbReference type="AGR" id="SGD:S000004133"/>
<dbReference type="SGD" id="S000004133">
    <property type="gene designation" value="DPH6"/>
</dbReference>
<dbReference type="VEuPathDB" id="FungiDB:YLR143W"/>
<dbReference type="eggNOG" id="KOG2316">
    <property type="taxonomic scope" value="Eukaryota"/>
</dbReference>
<dbReference type="eggNOG" id="KOG2317">
    <property type="taxonomic scope" value="Eukaryota"/>
</dbReference>
<dbReference type="GeneTree" id="ENSGT00420000029820"/>
<dbReference type="HOGENOM" id="CLU_010289_2_1_1"/>
<dbReference type="InParanoid" id="Q12429"/>
<dbReference type="OMA" id="HCRLAQS"/>
<dbReference type="OrthoDB" id="686384at2759"/>
<dbReference type="BioCyc" id="MetaCyc:MONOMER-17855"/>
<dbReference type="BioCyc" id="YEAST:MONOMER-17855"/>
<dbReference type="BRENDA" id="6.3.1.14">
    <property type="organism ID" value="984"/>
</dbReference>
<dbReference type="Reactome" id="R-SCE-5358493">
    <property type="pathway name" value="Synthesis of diphthamide-EEF2"/>
</dbReference>
<dbReference type="UniPathway" id="UPA00559"/>
<dbReference type="BioGRID-ORCS" id="850835">
    <property type="hits" value="0 hits in 10 CRISPR screens"/>
</dbReference>
<dbReference type="CD-CODE" id="E03F929F">
    <property type="entry name" value="Stress granule"/>
</dbReference>
<dbReference type="PRO" id="PR:Q12429"/>
<dbReference type="Proteomes" id="UP000002311">
    <property type="component" value="Chromosome XII"/>
</dbReference>
<dbReference type="RNAct" id="Q12429">
    <property type="molecule type" value="protein"/>
</dbReference>
<dbReference type="GO" id="GO:0005737">
    <property type="term" value="C:cytoplasm"/>
    <property type="evidence" value="ECO:0007005"/>
    <property type="project" value="SGD"/>
</dbReference>
<dbReference type="GO" id="GO:0005524">
    <property type="term" value="F:ATP binding"/>
    <property type="evidence" value="ECO:0007669"/>
    <property type="project" value="UniProtKB-KW"/>
</dbReference>
<dbReference type="GO" id="GO:0017178">
    <property type="term" value="F:diphthine-ammonia ligase activity"/>
    <property type="evidence" value="ECO:0000314"/>
    <property type="project" value="SGD"/>
</dbReference>
<dbReference type="GO" id="GO:0017183">
    <property type="term" value="P:protein histidyl modification to diphthamide"/>
    <property type="evidence" value="ECO:0000314"/>
    <property type="project" value="SGD"/>
</dbReference>
<dbReference type="CDD" id="cd01994">
    <property type="entry name" value="AANH_PF0828-like"/>
    <property type="match status" value="1"/>
</dbReference>
<dbReference type="CDD" id="cd06155">
    <property type="entry name" value="eu_AANH_C_1"/>
    <property type="match status" value="1"/>
</dbReference>
<dbReference type="CDD" id="cd06156">
    <property type="entry name" value="eu_AANH_C_2"/>
    <property type="match status" value="1"/>
</dbReference>
<dbReference type="FunFam" id="3.40.50.620:FF:000264">
    <property type="entry name" value="Diphthine--ammonia ligase"/>
    <property type="match status" value="1"/>
</dbReference>
<dbReference type="FunFam" id="3.90.1490.10:FF:000003">
    <property type="entry name" value="Diphthine--ammonia ligase"/>
    <property type="match status" value="1"/>
</dbReference>
<dbReference type="FunFam" id="3.30.1330.40:FF:000019">
    <property type="entry name" value="YLR143W-like protein"/>
    <property type="match status" value="1"/>
</dbReference>
<dbReference type="Gene3D" id="3.40.50.620">
    <property type="entry name" value="HUPs"/>
    <property type="match status" value="1"/>
</dbReference>
<dbReference type="Gene3D" id="3.90.1490.10">
    <property type="entry name" value="putative n-type atp pyrophosphatase, domain 2"/>
    <property type="match status" value="1"/>
</dbReference>
<dbReference type="Gene3D" id="3.30.1330.40">
    <property type="entry name" value="RutC-like"/>
    <property type="match status" value="2"/>
</dbReference>
<dbReference type="InterPro" id="IPR002761">
    <property type="entry name" value="Diphthami_syn_dom"/>
</dbReference>
<dbReference type="InterPro" id="IPR030662">
    <property type="entry name" value="DPH6/MJ0570"/>
</dbReference>
<dbReference type="InterPro" id="IPR014729">
    <property type="entry name" value="Rossmann-like_a/b/a_fold"/>
</dbReference>
<dbReference type="InterPro" id="IPR035959">
    <property type="entry name" value="RutC-like_sf"/>
</dbReference>
<dbReference type="InterPro" id="IPR006175">
    <property type="entry name" value="YjgF/YER057c/UK114"/>
</dbReference>
<dbReference type="NCBIfam" id="TIGR00290">
    <property type="entry name" value="MJ0570_dom"/>
    <property type="match status" value="1"/>
</dbReference>
<dbReference type="PANTHER" id="PTHR12196:SF2">
    <property type="entry name" value="DIPHTHINE--AMMONIA LIGASE"/>
    <property type="match status" value="1"/>
</dbReference>
<dbReference type="PANTHER" id="PTHR12196">
    <property type="entry name" value="DOMAIN OF UNKNOWN FUNCTION 71 DUF71 -CONTAINING PROTEIN"/>
    <property type="match status" value="1"/>
</dbReference>
<dbReference type="Pfam" id="PF01902">
    <property type="entry name" value="Diphthami_syn_2"/>
    <property type="match status" value="1"/>
</dbReference>
<dbReference type="Pfam" id="PF01042">
    <property type="entry name" value="Ribonuc_L-PSP"/>
    <property type="match status" value="1"/>
</dbReference>
<dbReference type="SUPFAM" id="SSF52402">
    <property type="entry name" value="Adenine nucleotide alpha hydrolases-like"/>
    <property type="match status" value="1"/>
</dbReference>
<dbReference type="SUPFAM" id="SSF55298">
    <property type="entry name" value="YjgF-like"/>
    <property type="match status" value="2"/>
</dbReference>
<evidence type="ECO:0000269" key="1">
    <source>
    </source>
</evidence>
<evidence type="ECO:0000269" key="2">
    <source>
    </source>
</evidence>
<evidence type="ECO:0000269" key="3">
    <source>
    </source>
</evidence>
<evidence type="ECO:0000269" key="4">
    <source>
    </source>
</evidence>
<evidence type="ECO:0000269" key="5">
    <source>
    </source>
</evidence>
<evidence type="ECO:0000305" key="6"/>
<proteinExistence type="evidence at protein level"/>
<organism>
    <name type="scientific">Saccharomyces cerevisiae (strain ATCC 204508 / S288c)</name>
    <name type="common">Baker's yeast</name>
    <dbReference type="NCBI Taxonomy" id="559292"/>
    <lineage>
        <taxon>Eukaryota</taxon>
        <taxon>Fungi</taxon>
        <taxon>Dikarya</taxon>
        <taxon>Ascomycota</taxon>
        <taxon>Saccharomycotina</taxon>
        <taxon>Saccharomycetes</taxon>
        <taxon>Saccharomycetales</taxon>
        <taxon>Saccharomycetaceae</taxon>
        <taxon>Saccharomyces</taxon>
    </lineage>
</organism>
<keyword id="KW-0067">ATP-binding</keyword>
<keyword id="KW-0963">Cytoplasm</keyword>
<keyword id="KW-0436">Ligase</keyword>
<keyword id="KW-0547">Nucleotide-binding</keyword>
<keyword id="KW-1185">Reference proteome</keyword>
<comment type="function">
    <text evidence="3 4">Amidase that catalyzes the last step of diphthamide biosynthesis using ammonium and ATP. Diphthamide biosynthesis consists in the conversion of an L-histidine residue in the translation elongation factor eEF-2 (EFT1 or EFT2) to diphthamide.</text>
</comment>
<comment type="catalytic activity">
    <reaction evidence="3">
        <text>diphthine-[translation elongation factor 2] + NH4(+) + ATP = diphthamide-[translation elongation factor 2] + AMP + diphosphate + H(+)</text>
        <dbReference type="Rhea" id="RHEA:19753"/>
        <dbReference type="Rhea" id="RHEA-COMP:10172"/>
        <dbReference type="Rhea" id="RHEA-COMP:10174"/>
        <dbReference type="ChEBI" id="CHEBI:15378"/>
        <dbReference type="ChEBI" id="CHEBI:16692"/>
        <dbReference type="ChEBI" id="CHEBI:28938"/>
        <dbReference type="ChEBI" id="CHEBI:30616"/>
        <dbReference type="ChEBI" id="CHEBI:33019"/>
        <dbReference type="ChEBI" id="CHEBI:82696"/>
        <dbReference type="ChEBI" id="CHEBI:456215"/>
        <dbReference type="EC" id="6.3.1.14"/>
    </reaction>
</comment>
<comment type="pathway">
    <text evidence="3">Protein modification; peptidyl-diphthamide biosynthesis.</text>
</comment>
<comment type="subunit">
    <text evidence="4">Interacts with elongation factor 2 (eEF-2; EFT1 or EFT2).</text>
</comment>
<comment type="subcellular location">
    <subcellularLocation>
        <location evidence="1">Cytoplasm</location>
    </subcellularLocation>
</comment>
<comment type="disruption phenotype">
    <text evidence="5">Resistance to sordarin.</text>
</comment>
<comment type="miscellaneous">
    <text evidence="2">Present with 2270 molecules/cell in log phase SD medium.</text>
</comment>
<comment type="similarity">
    <text evidence="6">In the C-terminal section; belongs to the RutC family.</text>
</comment>
<comment type="similarity">
    <text evidence="6">In the N-terminal section; belongs to the Diphthine--ammonia ligase family.</text>
</comment>
<comment type="sequence caution" evidence="6">
    <conflict type="frameshift">
        <sequence resource="EMBL-CDS" id="CAA62663"/>
    </conflict>
</comment>
<protein>
    <recommendedName>
        <fullName>Diphthine--ammonia ligase</fullName>
        <ecNumber evidence="3">6.3.1.14</ecNumber>
    </recommendedName>
    <alternativeName>
        <fullName>Diphthamide synthase</fullName>
    </alternativeName>
    <alternativeName>
        <fullName>Diphthamide synthetase</fullName>
    </alternativeName>
</protein>
<sequence length="685" mass="77941">MKFIALISGGKDSFYNIFHCLKNNHELIALGNIYPKESEEQELDSFMFQTVGHDLIDYYSKCIGVPLFRRSILRNTSNNVELNYTATQDDEIEELFELLRTVKDKIPDLEAVSVGAILSSYQRTRVENVCSRLGLVVLSYLWQRDQAELMGEMCLMSKDVNNVENDTNSGNKFDARIIKVAAIGLNEKHLGMSLPMMQPVLQKLNQLYQVHICGEGGEFETMVLDAPFFQHGYLELIDIVKCSDGEVHNARLKVKFQPRNLSKSFLLNQLDQLPVPSIFGNNWQDLTQNLPKQQAKTGEQRFENHMSNALPQTTINKTNDKLYISNLQSRKSETVEKQSEDIFTELADILHSNQIPRNHILSASLLIRDMSNFGKINKIYNEFLDLSKYGPLPPSRACVGSKCLPEDCHVQLSVVVDVKNTGKEKINKNKGGLHVQGRSYWAPCNIGPYSQSTWLNDDANQVSFISGQIGLVPQSMEILGTPLTDQIVLALQHFDTLCETIGAQEKLLMTCYISDESVLDSVIKTWAFYCSNMNHRSDLWMDKSDDVEKCLVLVKISELPRGAVAEFGGVTCKRLIVDDNDSDKKEREENDDVSTVFQKLNLNIEGFHNTTVSAFGYNRNFITGFVDSREELELILEKTPKSAQITLYYNPKEIITFHHHIGYYPVEKLFDYRGKEHRFGLHIRS</sequence>
<gene>
    <name type="primary">DPH6</name>
    <name type="ordered locus">YLR143W</name>
    <name type="ORF">L3177</name>
</gene>
<accession>Q12429</accession>
<accession>D6VYD7</accession>
<accession>Q07261</accession>
<name>DPH6_YEAST</name>
<reference key="1">
    <citation type="journal article" date="1997" name="Nature">
        <title>The nucleotide sequence of Saccharomyces cerevisiae chromosome XII.</title>
        <authorList>
            <person name="Johnston M."/>
            <person name="Hillier L.W."/>
            <person name="Riles L."/>
            <person name="Albermann K."/>
            <person name="Andre B."/>
            <person name="Ansorge W."/>
            <person name="Benes V."/>
            <person name="Brueckner M."/>
            <person name="Delius H."/>
            <person name="Dubois E."/>
            <person name="Duesterhoeft A."/>
            <person name="Entian K.-D."/>
            <person name="Floeth M."/>
            <person name="Goffeau A."/>
            <person name="Hebling U."/>
            <person name="Heumann K."/>
            <person name="Heuss-Neitzel D."/>
            <person name="Hilbert H."/>
            <person name="Hilger F."/>
            <person name="Kleine K."/>
            <person name="Koetter P."/>
            <person name="Louis E.J."/>
            <person name="Messenguy F."/>
            <person name="Mewes H.-W."/>
            <person name="Miosga T."/>
            <person name="Moestl D."/>
            <person name="Mueller-Auer S."/>
            <person name="Nentwich U."/>
            <person name="Obermaier B."/>
            <person name="Piravandi E."/>
            <person name="Pohl T.M."/>
            <person name="Portetelle D."/>
            <person name="Purnelle B."/>
            <person name="Rechmann S."/>
            <person name="Rieger M."/>
            <person name="Rinke M."/>
            <person name="Rose M."/>
            <person name="Scharfe M."/>
            <person name="Scherens B."/>
            <person name="Scholler P."/>
            <person name="Schwager C."/>
            <person name="Schwarz S."/>
            <person name="Underwood A.P."/>
            <person name="Urrestarazu L.A."/>
            <person name="Vandenbol M."/>
            <person name="Verhasselt P."/>
            <person name="Vierendeels F."/>
            <person name="Voet M."/>
            <person name="Volckaert G."/>
            <person name="Voss H."/>
            <person name="Wambutt R."/>
            <person name="Wedler E."/>
            <person name="Wedler H."/>
            <person name="Zimmermann F.K."/>
            <person name="Zollner A."/>
            <person name="Hani J."/>
            <person name="Hoheisel J.D."/>
        </authorList>
    </citation>
    <scope>NUCLEOTIDE SEQUENCE [LARGE SCALE GENOMIC DNA]</scope>
    <source>
        <strain>ATCC 204508 / S288c</strain>
    </source>
</reference>
<reference key="2">
    <citation type="journal article" date="2014" name="G3 (Bethesda)">
        <title>The reference genome sequence of Saccharomyces cerevisiae: Then and now.</title>
        <authorList>
            <person name="Engel S.R."/>
            <person name="Dietrich F.S."/>
            <person name="Fisk D.G."/>
            <person name="Binkley G."/>
            <person name="Balakrishnan R."/>
            <person name="Costanzo M.C."/>
            <person name="Dwight S.S."/>
            <person name="Hitz B.C."/>
            <person name="Karra K."/>
            <person name="Nash R.S."/>
            <person name="Weng S."/>
            <person name="Wong E.D."/>
            <person name="Lloyd P."/>
            <person name="Skrzypek M.S."/>
            <person name="Miyasato S.R."/>
            <person name="Simison M."/>
            <person name="Cherry J.M."/>
        </authorList>
    </citation>
    <scope>GENOME REANNOTATION</scope>
    <source>
        <strain>ATCC 204508 / S288c</strain>
    </source>
</reference>
<reference key="3">
    <citation type="journal article" date="2003" name="Nature">
        <title>Global analysis of protein localization in budding yeast.</title>
        <authorList>
            <person name="Huh W.-K."/>
            <person name="Falvo J.V."/>
            <person name="Gerke L.C."/>
            <person name="Carroll A.S."/>
            <person name="Howson R.W."/>
            <person name="Weissman J.S."/>
            <person name="O'Shea E.K."/>
        </authorList>
    </citation>
    <scope>SUBCELLULAR LOCATION [LARGE SCALE ANALYSIS]</scope>
</reference>
<reference key="4">
    <citation type="journal article" date="2003" name="Nature">
        <title>Global analysis of protein expression in yeast.</title>
        <authorList>
            <person name="Ghaemmaghami S."/>
            <person name="Huh W.-K."/>
            <person name="Bower K."/>
            <person name="Howson R.W."/>
            <person name="Belle A."/>
            <person name="Dephoure N."/>
            <person name="O'Shea E.K."/>
            <person name="Weissman J.S."/>
        </authorList>
    </citation>
    <scope>LEVEL OF PROTEIN EXPRESSION [LARGE SCALE ANALYSIS]</scope>
</reference>
<reference key="5">
    <citation type="journal article" date="2012" name="Proc. Natl. Acad. Sci. U.S.A.">
        <title>Chemogenomic approach identified yeast YLR143W as diphthamide synthetase.</title>
        <authorList>
            <person name="Su X."/>
            <person name="Lin Z."/>
            <person name="Chen W."/>
            <person name="Jiang H."/>
            <person name="Zhang S."/>
            <person name="Lin H."/>
        </authorList>
    </citation>
    <scope>FUNCTION</scope>
    <scope>PATHWAY</scope>
    <scope>CATALYTIC ACTIVITY</scope>
</reference>
<reference key="6">
    <citation type="journal article" date="2013" name="PLoS Genet.">
        <title>The amidation step of diphthamide biosynthesis in yeast requires DPH6, a gene identified through mining the DPH1-DPH5 interaction network.</title>
        <authorList>
            <person name="Uthman S."/>
            <person name="Bar C."/>
            <person name="Scheidt V."/>
            <person name="Liu S."/>
            <person name="ten Have S."/>
            <person name="Giorgini F."/>
            <person name="Stark M.J."/>
            <person name="Schaffrath R."/>
        </authorList>
    </citation>
    <scope>FUNCTION</scope>
    <scope>INTERACTION WITH ELONGATION FACTOR 2</scope>
    <scope>MUTAGENESIS OF GLY-216 AND GLU-220</scope>
</reference>
<reference key="7">
    <citation type="journal article" date="2013" name="Toxins">
        <title>Insights into diphthamide, key diphtheria toxin effector.</title>
        <authorList>
            <person name="Abdel-Fattah W."/>
            <person name="Scheidt V."/>
            <person name="Uthman S."/>
            <person name="Stark M.J."/>
            <person name="Schaffrath R."/>
        </authorList>
    </citation>
    <scope>DISRUPTION PHENOTYPE</scope>
    <scope>MUTAGENESIS OF GLU-220</scope>
</reference>
<feature type="chain" id="PRO_0000262869" description="Diphthine--ammonia ligase">
    <location>
        <begin position="1"/>
        <end position="685"/>
    </location>
</feature>
<feature type="mutagenesis site" description="Completely inactivates the enzyme." evidence="4">
    <original>G</original>
    <variation>N</variation>
    <location>
        <position position="216"/>
    </location>
</feature>
<feature type="mutagenesis site" description="Completely inactivates the enzyme. Resistance to sordarin." evidence="4 5">
    <original>E</original>
    <variation>A</variation>
    <variation>H</variation>
    <location>
        <position position="220"/>
    </location>
</feature>